<reference key="1">
    <citation type="journal article" date="2009" name="J. Bacteriol.">
        <title>The genome of Burkholderia cenocepacia J2315, an epidemic pathogen of cystic fibrosis patients.</title>
        <authorList>
            <person name="Holden M.T."/>
            <person name="Seth-Smith H.M."/>
            <person name="Crossman L.C."/>
            <person name="Sebaihia M."/>
            <person name="Bentley S.D."/>
            <person name="Cerdeno-Tarraga A.M."/>
            <person name="Thomson N.R."/>
            <person name="Bason N."/>
            <person name="Quail M.A."/>
            <person name="Sharp S."/>
            <person name="Cherevach I."/>
            <person name="Churcher C."/>
            <person name="Goodhead I."/>
            <person name="Hauser H."/>
            <person name="Holroyd N."/>
            <person name="Mungall K."/>
            <person name="Scott P."/>
            <person name="Walker D."/>
            <person name="White B."/>
            <person name="Rose H."/>
            <person name="Iversen P."/>
            <person name="Mil-Homens D."/>
            <person name="Rocha E.P."/>
            <person name="Fialho A.M."/>
            <person name="Baldwin A."/>
            <person name="Dowson C."/>
            <person name="Barrell B.G."/>
            <person name="Govan J.R."/>
            <person name="Vandamme P."/>
            <person name="Hart C.A."/>
            <person name="Mahenthiralingam E."/>
            <person name="Parkhill J."/>
        </authorList>
    </citation>
    <scope>NUCLEOTIDE SEQUENCE [LARGE SCALE GENOMIC DNA]</scope>
    <source>
        <strain>ATCC BAA-245 / DSM 16553 / LMG 16656 / NCTC 13227 / J2315 / CF5610</strain>
    </source>
</reference>
<comment type="function">
    <text evidence="1">Catalyzes the condensation of the acetyl group of acetyl-CoA with 3-methyl-2-oxobutanoate (2-ketoisovalerate) to form 3-carboxy-3-hydroxy-4-methylpentanoate (2-isopropylmalate).</text>
</comment>
<comment type="catalytic activity">
    <reaction evidence="1">
        <text>3-methyl-2-oxobutanoate + acetyl-CoA + H2O = (2S)-2-isopropylmalate + CoA + H(+)</text>
        <dbReference type="Rhea" id="RHEA:21524"/>
        <dbReference type="ChEBI" id="CHEBI:1178"/>
        <dbReference type="ChEBI" id="CHEBI:11851"/>
        <dbReference type="ChEBI" id="CHEBI:15377"/>
        <dbReference type="ChEBI" id="CHEBI:15378"/>
        <dbReference type="ChEBI" id="CHEBI:57287"/>
        <dbReference type="ChEBI" id="CHEBI:57288"/>
        <dbReference type="EC" id="2.3.3.13"/>
    </reaction>
</comment>
<comment type="cofactor">
    <cofactor evidence="1">
        <name>Mn(2+)</name>
        <dbReference type="ChEBI" id="CHEBI:29035"/>
    </cofactor>
</comment>
<comment type="pathway">
    <text evidence="1">Amino-acid biosynthesis; L-leucine biosynthesis; L-leucine from 3-methyl-2-oxobutanoate: step 1/4.</text>
</comment>
<comment type="subunit">
    <text evidence="1">Homodimer.</text>
</comment>
<comment type="subcellular location">
    <subcellularLocation>
        <location evidence="1">Cytoplasm</location>
    </subcellularLocation>
</comment>
<comment type="similarity">
    <text evidence="1">Belongs to the alpha-IPM synthase/homocitrate synthase family. LeuA type 1 subfamily.</text>
</comment>
<accession>B4E5N2</accession>
<sequence length="514" mass="55552">MTDKLIIFDTTLRDGEQSPGASMTKEEKIRIAKNLERMKVDVIEAGFAASSNGDFDAIHTIAGLVKDSTICSLARANDKDIQRAADALKPANSFRIHTFIATSPLHMEKKLRMTPDQVFEQARLAVRFARKFTDNVEFSPEDGSRSDMDFLCRVLEAVIAEGATTINIADTVGYGVPELYGNLVKTLRERIPNSDKAIFSVHCHNDLGMAVANSLAGVKIGGARQVECTINGLGERAGNTSLEEIVMAVKTRKDYFGLDVGIDTSQIVPTSKLVSQITGFVVQPNKAVVGANAFAHASGIHQDGVLKARDTYEIMRAEDVGWTANKIVLGKLSGRNAFKQRLQELGVSLDSEAELNAAFMRFKDLADRKAEIFDEDIIAIVSEESALAQEQEHFKFVSLSQRSETGEQPQAKVVFAVEGKEVTGEARGNGPVDATFNAIEGEVGSGSELLLYSVNAITTGTQAQGEVTVRLSKSGRIVNGVGTDPDIVAASAKAYISALNKLHSKDDKVNPQRS</sequence>
<name>LEU1_BURCJ</name>
<organism>
    <name type="scientific">Burkholderia cenocepacia (strain ATCC BAA-245 / DSM 16553 / LMG 16656 / NCTC 13227 / J2315 / CF5610)</name>
    <name type="common">Burkholderia cepacia (strain J2315)</name>
    <dbReference type="NCBI Taxonomy" id="216591"/>
    <lineage>
        <taxon>Bacteria</taxon>
        <taxon>Pseudomonadati</taxon>
        <taxon>Pseudomonadota</taxon>
        <taxon>Betaproteobacteria</taxon>
        <taxon>Burkholderiales</taxon>
        <taxon>Burkholderiaceae</taxon>
        <taxon>Burkholderia</taxon>
        <taxon>Burkholderia cepacia complex</taxon>
    </lineage>
</organism>
<dbReference type="EC" id="2.3.3.13" evidence="1"/>
<dbReference type="EMBL" id="AM747720">
    <property type="protein sequence ID" value="CAR52655.1"/>
    <property type="molecule type" value="Genomic_DNA"/>
</dbReference>
<dbReference type="RefSeq" id="WP_006491031.1">
    <property type="nucleotide sequence ID" value="NC_011000.1"/>
</dbReference>
<dbReference type="SMR" id="B4E5N2"/>
<dbReference type="KEGG" id="bcj:BCAL2354"/>
<dbReference type="eggNOG" id="COG0119">
    <property type="taxonomic scope" value="Bacteria"/>
</dbReference>
<dbReference type="HOGENOM" id="CLU_022158_0_1_4"/>
<dbReference type="BioCyc" id="BCEN216591:G1G1V-2599-MONOMER"/>
<dbReference type="UniPathway" id="UPA00048">
    <property type="reaction ID" value="UER00070"/>
</dbReference>
<dbReference type="Proteomes" id="UP000001035">
    <property type="component" value="Chromosome 1"/>
</dbReference>
<dbReference type="GO" id="GO:0005829">
    <property type="term" value="C:cytosol"/>
    <property type="evidence" value="ECO:0007669"/>
    <property type="project" value="TreeGrafter"/>
</dbReference>
<dbReference type="GO" id="GO:0003852">
    <property type="term" value="F:2-isopropylmalate synthase activity"/>
    <property type="evidence" value="ECO:0007669"/>
    <property type="project" value="UniProtKB-UniRule"/>
</dbReference>
<dbReference type="GO" id="GO:0003985">
    <property type="term" value="F:acetyl-CoA C-acetyltransferase activity"/>
    <property type="evidence" value="ECO:0007669"/>
    <property type="project" value="UniProtKB-UniRule"/>
</dbReference>
<dbReference type="GO" id="GO:0030145">
    <property type="term" value="F:manganese ion binding"/>
    <property type="evidence" value="ECO:0007669"/>
    <property type="project" value="UniProtKB-UniRule"/>
</dbReference>
<dbReference type="GO" id="GO:0009098">
    <property type="term" value="P:L-leucine biosynthetic process"/>
    <property type="evidence" value="ECO:0007669"/>
    <property type="project" value="UniProtKB-UniRule"/>
</dbReference>
<dbReference type="CDD" id="cd07940">
    <property type="entry name" value="DRE_TIM_IPMS"/>
    <property type="match status" value="1"/>
</dbReference>
<dbReference type="FunFam" id="1.10.238.260:FF:000001">
    <property type="entry name" value="2-isopropylmalate synthase"/>
    <property type="match status" value="1"/>
</dbReference>
<dbReference type="FunFam" id="3.20.20.70:FF:000010">
    <property type="entry name" value="2-isopropylmalate synthase"/>
    <property type="match status" value="1"/>
</dbReference>
<dbReference type="FunFam" id="3.30.160.270:FF:000003">
    <property type="entry name" value="2-isopropylmalate synthase"/>
    <property type="match status" value="1"/>
</dbReference>
<dbReference type="Gene3D" id="1.10.238.260">
    <property type="match status" value="1"/>
</dbReference>
<dbReference type="Gene3D" id="3.30.160.270">
    <property type="match status" value="1"/>
</dbReference>
<dbReference type="Gene3D" id="3.20.20.70">
    <property type="entry name" value="Aldolase class I"/>
    <property type="match status" value="1"/>
</dbReference>
<dbReference type="HAMAP" id="MF_01025">
    <property type="entry name" value="LeuA_type1"/>
    <property type="match status" value="1"/>
</dbReference>
<dbReference type="InterPro" id="IPR050073">
    <property type="entry name" value="2-IPM_HCS-like"/>
</dbReference>
<dbReference type="InterPro" id="IPR013709">
    <property type="entry name" value="2-isopropylmalate_synth_dimer"/>
</dbReference>
<dbReference type="InterPro" id="IPR002034">
    <property type="entry name" value="AIPM/Hcit_synth_CS"/>
</dbReference>
<dbReference type="InterPro" id="IPR013785">
    <property type="entry name" value="Aldolase_TIM"/>
</dbReference>
<dbReference type="InterPro" id="IPR054691">
    <property type="entry name" value="LeuA/HCS_post-cat"/>
</dbReference>
<dbReference type="InterPro" id="IPR036230">
    <property type="entry name" value="LeuA_allosteric_dom_sf"/>
</dbReference>
<dbReference type="InterPro" id="IPR005671">
    <property type="entry name" value="LeuA_bact_synth"/>
</dbReference>
<dbReference type="InterPro" id="IPR000891">
    <property type="entry name" value="PYR_CT"/>
</dbReference>
<dbReference type="NCBIfam" id="TIGR00973">
    <property type="entry name" value="leuA_bact"/>
    <property type="match status" value="1"/>
</dbReference>
<dbReference type="NCBIfam" id="NF002086">
    <property type="entry name" value="PRK00915.1-3"/>
    <property type="match status" value="1"/>
</dbReference>
<dbReference type="NCBIfam" id="NF002087">
    <property type="entry name" value="PRK00915.1-4"/>
    <property type="match status" value="1"/>
</dbReference>
<dbReference type="PANTHER" id="PTHR10277:SF9">
    <property type="entry name" value="2-ISOPROPYLMALATE SYNTHASE 1, CHLOROPLASTIC-RELATED"/>
    <property type="match status" value="1"/>
</dbReference>
<dbReference type="PANTHER" id="PTHR10277">
    <property type="entry name" value="HOMOCITRATE SYNTHASE-RELATED"/>
    <property type="match status" value="1"/>
</dbReference>
<dbReference type="Pfam" id="PF22617">
    <property type="entry name" value="HCS_D2"/>
    <property type="match status" value="1"/>
</dbReference>
<dbReference type="Pfam" id="PF00682">
    <property type="entry name" value="HMGL-like"/>
    <property type="match status" value="1"/>
</dbReference>
<dbReference type="Pfam" id="PF08502">
    <property type="entry name" value="LeuA_dimer"/>
    <property type="match status" value="1"/>
</dbReference>
<dbReference type="SMART" id="SM00917">
    <property type="entry name" value="LeuA_dimer"/>
    <property type="match status" value="1"/>
</dbReference>
<dbReference type="SUPFAM" id="SSF110921">
    <property type="entry name" value="2-isopropylmalate synthase LeuA, allosteric (dimerisation) domain"/>
    <property type="match status" value="1"/>
</dbReference>
<dbReference type="SUPFAM" id="SSF51569">
    <property type="entry name" value="Aldolase"/>
    <property type="match status" value="1"/>
</dbReference>
<dbReference type="PROSITE" id="PS00815">
    <property type="entry name" value="AIPM_HOMOCIT_SYNTH_1"/>
    <property type="match status" value="1"/>
</dbReference>
<dbReference type="PROSITE" id="PS00816">
    <property type="entry name" value="AIPM_HOMOCIT_SYNTH_2"/>
    <property type="match status" value="1"/>
</dbReference>
<dbReference type="PROSITE" id="PS50991">
    <property type="entry name" value="PYR_CT"/>
    <property type="match status" value="1"/>
</dbReference>
<evidence type="ECO:0000255" key="1">
    <source>
        <dbReference type="HAMAP-Rule" id="MF_01025"/>
    </source>
</evidence>
<gene>
    <name evidence="1" type="primary">leuA</name>
    <name type="ordered locus">BceJ2315_23140</name>
    <name type="ORF">BCAL2354</name>
</gene>
<keyword id="KW-0028">Amino-acid biosynthesis</keyword>
<keyword id="KW-0100">Branched-chain amino acid biosynthesis</keyword>
<keyword id="KW-0963">Cytoplasm</keyword>
<keyword id="KW-0432">Leucine biosynthesis</keyword>
<keyword id="KW-0464">Manganese</keyword>
<keyword id="KW-0479">Metal-binding</keyword>
<keyword id="KW-0808">Transferase</keyword>
<feature type="chain" id="PRO_1000149148" description="2-isopropylmalate synthase">
    <location>
        <begin position="1"/>
        <end position="514"/>
    </location>
</feature>
<feature type="domain" description="Pyruvate carboxyltransferase" evidence="1">
    <location>
        <begin position="5"/>
        <end position="268"/>
    </location>
</feature>
<feature type="region of interest" description="Regulatory domain" evidence="1">
    <location>
        <begin position="395"/>
        <end position="514"/>
    </location>
</feature>
<feature type="binding site" evidence="1">
    <location>
        <position position="14"/>
    </location>
    <ligand>
        <name>Mn(2+)</name>
        <dbReference type="ChEBI" id="CHEBI:29035"/>
    </ligand>
</feature>
<feature type="binding site" evidence="1">
    <location>
        <position position="202"/>
    </location>
    <ligand>
        <name>Mn(2+)</name>
        <dbReference type="ChEBI" id="CHEBI:29035"/>
    </ligand>
</feature>
<feature type="binding site" evidence="1">
    <location>
        <position position="204"/>
    </location>
    <ligand>
        <name>Mn(2+)</name>
        <dbReference type="ChEBI" id="CHEBI:29035"/>
    </ligand>
</feature>
<feature type="binding site" evidence="1">
    <location>
        <position position="239"/>
    </location>
    <ligand>
        <name>Mn(2+)</name>
        <dbReference type="ChEBI" id="CHEBI:29035"/>
    </ligand>
</feature>
<proteinExistence type="inferred from homology"/>
<protein>
    <recommendedName>
        <fullName evidence="1">2-isopropylmalate synthase</fullName>
        <ecNumber evidence="1">2.3.3.13</ecNumber>
    </recommendedName>
    <alternativeName>
        <fullName evidence="1">Alpha-IPM synthase</fullName>
    </alternativeName>
    <alternativeName>
        <fullName evidence="1">Alpha-isopropylmalate synthase</fullName>
    </alternativeName>
</protein>